<dbReference type="EMBL" id="AH003523">
    <property type="protein sequence ID" value="AAA99006.1"/>
    <property type="molecule type" value="Genomic_DNA"/>
</dbReference>
<dbReference type="EMBL" id="X14442">
    <property type="protein sequence ID" value="CAA32614.1"/>
    <property type="molecule type" value="Genomic_DNA"/>
</dbReference>
<dbReference type="EMBL" id="M35279">
    <property type="protein sequence ID" value="AAA98078.1"/>
    <property type="molecule type" value="Genomic_DNA"/>
</dbReference>
<dbReference type="EMBL" id="AP001918">
    <property type="protein sequence ID" value="BAA97874.1"/>
    <property type="molecule type" value="Genomic_DNA"/>
</dbReference>
<dbReference type="EMBL" id="AP001918">
    <property type="protein sequence ID" value="BAA97875.1"/>
    <property type="molecule type" value="Genomic_DNA"/>
</dbReference>
<dbReference type="PIR" id="C26870">
    <property type="entry name" value="C26870"/>
</dbReference>
<dbReference type="RefSeq" id="NP_061383.1">
    <property type="nucleotide sequence ID" value="NC_002483.1"/>
</dbReference>
<dbReference type="RefSeq" id="NP_061384.1">
    <property type="nucleotide sequence ID" value="NC_002483.1"/>
</dbReference>
<dbReference type="SMR" id="P13970"/>
<dbReference type="TCDB" id="1.E.53.1.11">
    <property type="family name" value="the toxic hok/gef protein (hok/gef) family"/>
</dbReference>
<dbReference type="PATRIC" id="fig|83333.107.peg.599"/>
<dbReference type="GO" id="GO:0005886">
    <property type="term" value="C:plasma membrane"/>
    <property type="evidence" value="ECO:0007669"/>
    <property type="project" value="UniProtKB-SubCell"/>
</dbReference>
<dbReference type="InterPro" id="IPR000021">
    <property type="entry name" value="Hok/gef_toxin"/>
</dbReference>
<dbReference type="InterPro" id="IPR018084">
    <property type="entry name" value="Hok/gef_toxin_CS"/>
</dbReference>
<dbReference type="Pfam" id="PF01848">
    <property type="entry name" value="HOK_GEF"/>
    <property type="match status" value="1"/>
</dbReference>
<dbReference type="PRINTS" id="PR00281">
    <property type="entry name" value="HOKGEFTOXIC"/>
</dbReference>
<dbReference type="PROSITE" id="PS00556">
    <property type="entry name" value="HOK_GEF"/>
    <property type="match status" value="1"/>
</dbReference>
<keyword id="KW-0024">Alternative initiation</keyword>
<keyword id="KW-0997">Cell inner membrane</keyword>
<keyword id="KW-1003">Cell membrane</keyword>
<keyword id="KW-0472">Membrane</keyword>
<keyword id="KW-0614">Plasmid</keyword>
<keyword id="KW-1277">Toxin-antitoxin system</keyword>
<keyword id="KW-0812">Transmembrane</keyword>
<keyword id="KW-1133">Transmembrane helix</keyword>
<name>SRNB_ECOLI</name>
<protein>
    <recommendedName>
        <fullName>Protein SrnB</fullName>
    </recommendedName>
</protein>
<sequence length="68" mass="7792">MKYLNTTDCSLFLAERSKFMTKYALIGLLAVCATVLCFSLIFRERLCELNIHRGNTVVQVTLAYEARK</sequence>
<reference key="1">
    <citation type="journal article" date="1987" name="J. Bacteriol.">
        <title>Nucleotide sequence analysis of RepFIC, a basic replicon present in IncFI plasmids P307 and F, and its relation to the RepA replicon of IncFII plasmids.</title>
        <authorList>
            <person name="Saadi S."/>
            <person name="Maas W.K."/>
            <person name="Hill D.F."/>
            <person name="Bergquist P.L."/>
        </authorList>
    </citation>
    <scope>NUCLEOTIDE SEQUENCE [GENOMIC DNA]</scope>
</reference>
<reference key="2">
    <citation type="journal article" date="1986" name="FEMS Microbiol. Lett.">
        <title>Nucleotide sequence of the F plasmid gene srnB that promotes degradation of stable RNA in Escherichia coli.</title>
        <authorList>
            <person name="Akimoto S."/>
            <person name="Ono K."/>
            <person name="Ono T."/>
            <person name="Ohnishi Y."/>
        </authorList>
    </citation>
    <scope>NUCLEOTIDE SEQUENCE [GENOMIC DNA]</scope>
    <scope>FUNCTION</scope>
    <source>
        <strain>YS12</strain>
    </source>
</reference>
<reference key="3">
    <citation type="submission" date="2000-04" db="EMBL/GenBank/DDBJ databases">
        <title>Complete nucleotide sequence of the F plasmid: its implications for organization and diversification of plasmid genomes.</title>
        <authorList>
            <person name="Shimizu H."/>
            <person name="Saitoh Y."/>
            <person name="Suda Y."/>
            <person name="Uehara K."/>
            <person name="Sampei G."/>
            <person name="Mizobuchi K."/>
        </authorList>
    </citation>
    <scope>NUCLEOTIDE SEQUENCE [LARGE SCALE GENOMIC DNA]</scope>
    <source>
        <strain>K12 / CR63</strain>
    </source>
</reference>
<evidence type="ECO:0000250" key="1">
    <source>
        <dbReference type="UniProtKB" id="P0ACG4"/>
    </source>
</evidence>
<evidence type="ECO:0000255" key="2"/>
<evidence type="ECO:0000305" key="3"/>
<evidence type="ECO:0000305" key="4">
    <source ref="2"/>
</evidence>
<comment type="function">
    <text evidence="1 4">Toxic component of a type I toxin-antitoxin (TA) system (By similarity). Its normal function is believed to be effective plasmid stabilization through postsegregational killing of cells that have lost the F plasmid. Promotes degradation of stable RNA in E.coli (Ref.2).</text>
</comment>
<comment type="subcellular location">
    <subcellularLocation>
        <location evidence="1">Cell inner membrane</location>
        <topology evidence="3">Single-pass membrane protein</topology>
    </subcellularLocation>
</comment>
<comment type="alternative products">
    <event type="alternative initiation"/>
    <isoform>
        <id>P13970-1</id>
        <name>srnB</name>
        <sequence type="displayed"/>
    </isoform>
    <isoform>
        <id>P13970-2</id>
        <name>srnB'</name>
        <sequence type="described" ref="VSP_018748"/>
    </isoform>
</comment>
<comment type="similarity">
    <text evidence="3">Belongs to the Hok/Gef family.</text>
</comment>
<accession>P13970</accession>
<gene>
    <name type="primary">srnB</name>
    <name type="ordered locus">ECOK12F004/ECOK12F005</name>
</gene>
<feature type="chain" id="PRO_0000013487" description="Protein SrnB">
    <location>
        <begin position="1"/>
        <end position="68"/>
    </location>
</feature>
<feature type="transmembrane region" description="Helical" evidence="2">
    <location>
        <begin position="23"/>
        <end position="42"/>
    </location>
</feature>
<feature type="splice variant" id="VSP_018748" description="In isoform srnB'." evidence="3">
    <location>
        <begin position="1"/>
        <end position="19"/>
    </location>
</feature>
<proteinExistence type="inferred from homology"/>
<organism>
    <name type="scientific">Escherichia coli (strain K12)</name>
    <dbReference type="NCBI Taxonomy" id="83333"/>
    <lineage>
        <taxon>Bacteria</taxon>
        <taxon>Pseudomonadati</taxon>
        <taxon>Pseudomonadota</taxon>
        <taxon>Gammaproteobacteria</taxon>
        <taxon>Enterobacterales</taxon>
        <taxon>Enterobacteriaceae</taxon>
        <taxon>Escherichia</taxon>
    </lineage>
</organism>
<geneLocation type="plasmid">
    <name>F</name>
</geneLocation>